<protein>
    <recommendedName>
        <fullName>Probable sulfate transporter 3.3</fullName>
    </recommendedName>
    <alternativeName>
        <fullName>AST91</fullName>
    </alternativeName>
</protein>
<evidence type="ECO:0000250" key="1"/>
<evidence type="ECO:0000255" key="2"/>
<evidence type="ECO:0000255" key="3">
    <source>
        <dbReference type="PROSITE-ProRule" id="PRU00198"/>
    </source>
</evidence>
<evidence type="ECO:0000269" key="4">
    <source ref="4"/>
</evidence>
<evidence type="ECO:0000305" key="5"/>
<comment type="function">
    <text evidence="1">H(+)/sulfate cotransporter that may play a role in the regulation of sulfate assimilation.</text>
</comment>
<comment type="subcellular location">
    <subcellularLocation>
        <location evidence="5">Membrane</location>
        <topology evidence="5">Multi-pass membrane protein</topology>
    </subcellularLocation>
</comment>
<comment type="tissue specificity">
    <text evidence="4">Expressed only in leaves.</text>
</comment>
<comment type="similarity">
    <text evidence="5">Belongs to the SLC26A/SulP transporter (TC 2.A.53) family.</text>
</comment>
<feature type="chain" id="PRO_0000080179" description="Probable sulfate transporter 3.3">
    <location>
        <begin position="1"/>
        <end position="631"/>
    </location>
</feature>
<feature type="topological domain" description="Cytoplasmic" evidence="2">
    <location>
        <begin position="1"/>
        <end position="69"/>
    </location>
</feature>
<feature type="transmembrane region" description="Helical" evidence="2">
    <location>
        <begin position="70"/>
        <end position="90"/>
    </location>
</feature>
<feature type="topological domain" description="Extracellular" evidence="2">
    <location>
        <begin position="91"/>
        <end position="92"/>
    </location>
</feature>
<feature type="transmembrane region" description="Helical" evidence="2">
    <location>
        <begin position="93"/>
        <end position="113"/>
    </location>
</feature>
<feature type="topological domain" description="Cytoplasmic" evidence="2">
    <location>
        <begin position="114"/>
        <end position="117"/>
    </location>
</feature>
<feature type="transmembrane region" description="Helical" evidence="2">
    <location>
        <begin position="118"/>
        <end position="138"/>
    </location>
</feature>
<feature type="topological domain" description="Extracellular" evidence="2">
    <location>
        <begin position="139"/>
        <end position="144"/>
    </location>
</feature>
<feature type="transmembrane region" description="Helical" evidence="2">
    <location>
        <begin position="145"/>
        <end position="165"/>
    </location>
</feature>
<feature type="topological domain" description="Cytoplasmic" evidence="2">
    <location>
        <begin position="166"/>
        <end position="171"/>
    </location>
</feature>
<feature type="transmembrane region" description="Helical" evidence="2">
    <location>
        <begin position="172"/>
        <end position="192"/>
    </location>
</feature>
<feature type="topological domain" description="Extracellular" evidence="2">
    <location>
        <begin position="193"/>
        <end position="223"/>
    </location>
</feature>
<feature type="transmembrane region" description="Helical" evidence="2">
    <location>
        <begin position="224"/>
        <end position="244"/>
    </location>
</feature>
<feature type="topological domain" description="Cytoplasmic" evidence="2">
    <location>
        <begin position="245"/>
        <end position="256"/>
    </location>
</feature>
<feature type="transmembrane region" description="Helical" evidence="2">
    <location>
        <begin position="257"/>
        <end position="277"/>
    </location>
</feature>
<feature type="topological domain" description="Extracellular" evidence="2">
    <location>
        <begin position="278"/>
        <end position="309"/>
    </location>
</feature>
<feature type="transmembrane region" description="Helical" evidence="2">
    <location>
        <begin position="310"/>
        <end position="330"/>
    </location>
</feature>
<feature type="topological domain" description="Cytoplasmic" evidence="2">
    <location>
        <begin position="331"/>
        <end position="347"/>
    </location>
</feature>
<feature type="transmembrane region" description="Helical" evidence="2">
    <location>
        <begin position="348"/>
        <end position="368"/>
    </location>
</feature>
<feature type="topological domain" description="Extracellular" evidence="2">
    <location>
        <begin position="369"/>
        <end position="384"/>
    </location>
</feature>
<feature type="transmembrane region" description="Helical" evidence="2">
    <location>
        <begin position="385"/>
        <end position="405"/>
    </location>
</feature>
<feature type="topological domain" description="Cytoplasmic" evidence="2">
    <location>
        <begin position="406"/>
        <end position="410"/>
    </location>
</feature>
<feature type="transmembrane region" description="Helical" evidence="2">
    <location>
        <begin position="411"/>
        <end position="431"/>
    </location>
</feature>
<feature type="topological domain" description="Extracellular" evidence="2">
    <location>
        <begin position="432"/>
        <end position="441"/>
    </location>
</feature>
<feature type="transmembrane region" description="Helical" evidence="2">
    <location>
        <begin position="442"/>
        <end position="462"/>
    </location>
</feature>
<feature type="topological domain" description="Cytoplasmic" evidence="2">
    <location>
        <begin position="463"/>
        <end position="631"/>
    </location>
</feature>
<feature type="domain" description="STAS" evidence="3">
    <location>
        <begin position="497"/>
        <end position="621"/>
    </location>
</feature>
<feature type="sequence conflict" description="In Ref. 1; BAA75015." evidence="5" ref="1">
    <original>KL</original>
    <variation>NV</variation>
    <location>
        <begin position="89"/>
        <end position="90"/>
    </location>
</feature>
<sequence>MEVHKVVAPPHKSTVAKLKTKLKETFFPDDPLRQFRGQPNRTKLIRAAQYIFPILQWCPEYSFSLLKSDVVSGLTIASLAIPQGISYAKLANLPPIVGLYSSFVPPLVYAVLGSSRDLAVGPVSIASLILGSMLRQQVSPVDDPVLFLQLAFSSTFFAGLFQASLGILRLGFIIDFLSKATLIGFMGGAAIIVSLQQLKGLLGITHFTKHMSVVPVLSSVFQHTNEWSWQTIVMGVCFLLFLLSTRHLSMKKPKLFWVSAGAPLLSVIVSTLLVFVFRAERHGISVIGKLPEGLNPPSWNMLQFHGSHLALVAKTGLVTGIVSLTEGIAVGRTFAALKNYHVDGNKEMIAIGLMNVVGSATSCYVTTGAFSRSAVNNNAGAKTAVSNIVMSVTVMVTLLFLMPLFEYTPNVVLGAIIVTAVIGLIDLPAACHIWKIDKFDFLVMLCAFFGVIFLSVQNGLAIAVGLSLFKILMQVTRPKMVIMGNIPGTDIYRDLHHYKEAQRIPGFLVLSIESPVNFANSNYLTERTSRWIEECEEEEAQEKHSSLQFLILEMSAVSGVDTNGVSFFKELKKTTAKKDIELVFVNPLSEVVEKLQRADEQKEFMRPEFLFLTVAEAVASLSLKGPSLSNV</sequence>
<reference key="1">
    <citation type="submission" date="1999-02" db="EMBL/GenBank/DDBJ databases">
        <title>Sulfate transporter AST91 from Arabidopsis thaliana.</title>
        <authorList>
            <person name="Takahashi H."/>
            <person name="Saito K."/>
        </authorList>
    </citation>
    <scope>NUCLEOTIDE SEQUENCE</scope>
</reference>
<reference key="2">
    <citation type="journal article" date="2000" name="Nature">
        <title>Sequence and analysis of chromosome 1 of the plant Arabidopsis thaliana.</title>
        <authorList>
            <person name="Theologis A."/>
            <person name="Ecker J.R."/>
            <person name="Palm C.J."/>
            <person name="Federspiel N.A."/>
            <person name="Kaul S."/>
            <person name="White O."/>
            <person name="Alonso J."/>
            <person name="Altafi H."/>
            <person name="Araujo R."/>
            <person name="Bowman C.L."/>
            <person name="Brooks S.Y."/>
            <person name="Buehler E."/>
            <person name="Chan A."/>
            <person name="Chao Q."/>
            <person name="Chen H."/>
            <person name="Cheuk R.F."/>
            <person name="Chin C.W."/>
            <person name="Chung M.K."/>
            <person name="Conn L."/>
            <person name="Conway A.B."/>
            <person name="Conway A.R."/>
            <person name="Creasy T.H."/>
            <person name="Dewar K."/>
            <person name="Dunn P."/>
            <person name="Etgu P."/>
            <person name="Feldblyum T.V."/>
            <person name="Feng J.-D."/>
            <person name="Fong B."/>
            <person name="Fujii C.Y."/>
            <person name="Gill J.E."/>
            <person name="Goldsmith A.D."/>
            <person name="Haas B."/>
            <person name="Hansen N.F."/>
            <person name="Hughes B."/>
            <person name="Huizar L."/>
            <person name="Hunter J.L."/>
            <person name="Jenkins J."/>
            <person name="Johnson-Hopson C."/>
            <person name="Khan S."/>
            <person name="Khaykin E."/>
            <person name="Kim C.J."/>
            <person name="Koo H.L."/>
            <person name="Kremenetskaia I."/>
            <person name="Kurtz D.B."/>
            <person name="Kwan A."/>
            <person name="Lam B."/>
            <person name="Langin-Hooper S."/>
            <person name="Lee A."/>
            <person name="Lee J.M."/>
            <person name="Lenz C.A."/>
            <person name="Li J.H."/>
            <person name="Li Y.-P."/>
            <person name="Lin X."/>
            <person name="Liu S.X."/>
            <person name="Liu Z.A."/>
            <person name="Luros J.S."/>
            <person name="Maiti R."/>
            <person name="Marziali A."/>
            <person name="Militscher J."/>
            <person name="Miranda M."/>
            <person name="Nguyen M."/>
            <person name="Nierman W.C."/>
            <person name="Osborne B.I."/>
            <person name="Pai G."/>
            <person name="Peterson J."/>
            <person name="Pham P.K."/>
            <person name="Rizzo M."/>
            <person name="Rooney T."/>
            <person name="Rowley D."/>
            <person name="Sakano H."/>
            <person name="Salzberg S.L."/>
            <person name="Schwartz J.R."/>
            <person name="Shinn P."/>
            <person name="Southwick A.M."/>
            <person name="Sun H."/>
            <person name="Tallon L.J."/>
            <person name="Tambunga G."/>
            <person name="Toriumi M.J."/>
            <person name="Town C.D."/>
            <person name="Utterback T."/>
            <person name="Van Aken S."/>
            <person name="Vaysberg M."/>
            <person name="Vysotskaia V.S."/>
            <person name="Walker M."/>
            <person name="Wu D."/>
            <person name="Yu G."/>
            <person name="Fraser C.M."/>
            <person name="Venter J.C."/>
            <person name="Davis R.W."/>
        </authorList>
    </citation>
    <scope>NUCLEOTIDE SEQUENCE [LARGE SCALE GENOMIC DNA]</scope>
    <source>
        <strain>cv. Columbia</strain>
    </source>
</reference>
<reference key="3">
    <citation type="journal article" date="2017" name="Plant J.">
        <title>Araport11: a complete reannotation of the Arabidopsis thaliana reference genome.</title>
        <authorList>
            <person name="Cheng C.Y."/>
            <person name="Krishnakumar V."/>
            <person name="Chan A.P."/>
            <person name="Thibaud-Nissen F."/>
            <person name="Schobel S."/>
            <person name="Town C.D."/>
        </authorList>
    </citation>
    <scope>GENOME REANNOTATION</scope>
    <source>
        <strain>cv. Columbia</strain>
    </source>
</reference>
<reference key="4">
    <citation type="book" date="2000" name="Sulfur nutrition and sulfur assimilation in higher plants">
        <title>Molecular characterization of the sulfate transporter gene family in Arabidopsis thaliana.</title>
        <editorList>
            <person name="Brunold C."/>
        </editorList>
        <authorList>
            <person name="Takahashi H."/>
            <person name="Watanbe A."/>
            <person name="Sasakura N."/>
            <person name="Asanuma W."/>
            <person name="Nakamura M."/>
            <person name="Saito K."/>
        </authorList>
    </citation>
    <scope>TISSUE SPECIFICITY</scope>
</reference>
<proteinExistence type="evidence at transcript level"/>
<name>SUT33_ARATH</name>
<dbReference type="EMBL" id="AB023423">
    <property type="protein sequence ID" value="BAA75015.1"/>
    <property type="molecule type" value="mRNA"/>
</dbReference>
<dbReference type="EMBL" id="AC002311">
    <property type="protein sequence ID" value="AAC00610.1"/>
    <property type="molecule type" value="Genomic_DNA"/>
</dbReference>
<dbReference type="EMBL" id="CP002684">
    <property type="protein sequence ID" value="AEE30335.1"/>
    <property type="molecule type" value="Genomic_DNA"/>
</dbReference>
<dbReference type="PIR" id="B86365">
    <property type="entry name" value="B86365"/>
</dbReference>
<dbReference type="SMR" id="Q9SXS2"/>
<dbReference type="BioGRID" id="24156">
    <property type="interactions" value="7"/>
</dbReference>
<dbReference type="FunCoup" id="Q9SXS2">
    <property type="interactions" value="517"/>
</dbReference>
<dbReference type="IntAct" id="Q9SXS2">
    <property type="interactions" value="7"/>
</dbReference>
<dbReference type="STRING" id="3702.Q9SXS2"/>
<dbReference type="iPTMnet" id="Q9SXS2"/>
<dbReference type="PaxDb" id="3702-AT1G23090.1"/>
<dbReference type="ProteomicsDB" id="226831"/>
<dbReference type="EnsemblPlants" id="AT1G23090.1">
    <property type="protein sequence ID" value="AT1G23090.1"/>
    <property type="gene ID" value="AT1G23090"/>
</dbReference>
<dbReference type="GeneID" id="838917"/>
<dbReference type="Gramene" id="AT1G23090.1">
    <property type="protein sequence ID" value="AT1G23090.1"/>
    <property type="gene ID" value="AT1G23090"/>
</dbReference>
<dbReference type="KEGG" id="ath:AT1G23090"/>
<dbReference type="Araport" id="AT1G23090"/>
<dbReference type="TAIR" id="AT1G23090">
    <property type="gene designation" value="SULTR3"/>
</dbReference>
<dbReference type="eggNOG" id="KOG0236">
    <property type="taxonomic scope" value="Eukaryota"/>
</dbReference>
<dbReference type="HOGENOM" id="CLU_003182_13_2_1"/>
<dbReference type="InParanoid" id="Q9SXS2"/>
<dbReference type="OMA" id="YKDAQRV"/>
<dbReference type="OrthoDB" id="288203at2759"/>
<dbReference type="PhylomeDB" id="Q9SXS2"/>
<dbReference type="PRO" id="PR:Q9SXS2"/>
<dbReference type="Proteomes" id="UP000006548">
    <property type="component" value="Chromosome 1"/>
</dbReference>
<dbReference type="ExpressionAtlas" id="Q9SXS2">
    <property type="expression patterns" value="baseline and differential"/>
</dbReference>
<dbReference type="GO" id="GO:0016020">
    <property type="term" value="C:membrane"/>
    <property type="evidence" value="ECO:0007669"/>
    <property type="project" value="UniProtKB-SubCell"/>
</dbReference>
<dbReference type="GO" id="GO:0008271">
    <property type="term" value="F:secondary active sulfate transmembrane transporter activity"/>
    <property type="evidence" value="ECO:0007669"/>
    <property type="project" value="InterPro"/>
</dbReference>
<dbReference type="GO" id="GO:0015293">
    <property type="term" value="F:symporter activity"/>
    <property type="evidence" value="ECO:0007669"/>
    <property type="project" value="UniProtKB-KW"/>
</dbReference>
<dbReference type="CDD" id="cd07042">
    <property type="entry name" value="STAS_SulP_like_sulfate_transporter"/>
    <property type="match status" value="1"/>
</dbReference>
<dbReference type="FunFam" id="3.30.750.24:FF:000002">
    <property type="entry name" value="Sulfate transporter 31"/>
    <property type="match status" value="1"/>
</dbReference>
<dbReference type="Gene3D" id="3.30.750.24">
    <property type="entry name" value="STAS domain"/>
    <property type="match status" value="1"/>
</dbReference>
<dbReference type="InterPro" id="IPR018045">
    <property type="entry name" value="S04_transporter_CS"/>
</dbReference>
<dbReference type="InterPro" id="IPR011547">
    <property type="entry name" value="SLC26A/SulP_dom"/>
</dbReference>
<dbReference type="InterPro" id="IPR001902">
    <property type="entry name" value="SLC26A/SulP_fam"/>
</dbReference>
<dbReference type="InterPro" id="IPR002645">
    <property type="entry name" value="STAS_dom"/>
</dbReference>
<dbReference type="InterPro" id="IPR036513">
    <property type="entry name" value="STAS_dom_sf"/>
</dbReference>
<dbReference type="NCBIfam" id="TIGR00815">
    <property type="entry name" value="sulP"/>
    <property type="match status" value="1"/>
</dbReference>
<dbReference type="PANTHER" id="PTHR11814">
    <property type="entry name" value="SULFATE TRANSPORTER"/>
    <property type="match status" value="1"/>
</dbReference>
<dbReference type="Pfam" id="PF01740">
    <property type="entry name" value="STAS"/>
    <property type="match status" value="1"/>
</dbReference>
<dbReference type="Pfam" id="PF00916">
    <property type="entry name" value="Sulfate_transp"/>
    <property type="match status" value="1"/>
</dbReference>
<dbReference type="SUPFAM" id="SSF52091">
    <property type="entry name" value="SpoIIaa-like"/>
    <property type="match status" value="1"/>
</dbReference>
<dbReference type="PROSITE" id="PS01130">
    <property type="entry name" value="SLC26A"/>
    <property type="match status" value="1"/>
</dbReference>
<dbReference type="PROSITE" id="PS50801">
    <property type="entry name" value="STAS"/>
    <property type="match status" value="1"/>
</dbReference>
<accession>Q9SXS2</accession>
<accession>O49307</accession>
<gene>
    <name type="primary">SULTR3;3</name>
    <name type="ordered locus">At1g23090</name>
    <name type="ORF">T26J12.13</name>
</gene>
<keyword id="KW-0472">Membrane</keyword>
<keyword id="KW-1185">Reference proteome</keyword>
<keyword id="KW-0764">Sulfate transport</keyword>
<keyword id="KW-0769">Symport</keyword>
<keyword id="KW-0812">Transmembrane</keyword>
<keyword id="KW-1133">Transmembrane helix</keyword>
<keyword id="KW-0813">Transport</keyword>
<organism>
    <name type="scientific">Arabidopsis thaliana</name>
    <name type="common">Mouse-ear cress</name>
    <dbReference type="NCBI Taxonomy" id="3702"/>
    <lineage>
        <taxon>Eukaryota</taxon>
        <taxon>Viridiplantae</taxon>
        <taxon>Streptophyta</taxon>
        <taxon>Embryophyta</taxon>
        <taxon>Tracheophyta</taxon>
        <taxon>Spermatophyta</taxon>
        <taxon>Magnoliopsida</taxon>
        <taxon>eudicotyledons</taxon>
        <taxon>Gunneridae</taxon>
        <taxon>Pentapetalae</taxon>
        <taxon>rosids</taxon>
        <taxon>malvids</taxon>
        <taxon>Brassicales</taxon>
        <taxon>Brassicaceae</taxon>
        <taxon>Camelineae</taxon>
        <taxon>Arabidopsis</taxon>
    </lineage>
</organism>